<accession>Q57ET1</accession>
<comment type="function">
    <text evidence="1">Catalyzes the acyloin condensation reaction between C atoms 2 and 3 of pyruvate and glyceraldehyde 3-phosphate to yield 1-deoxy-D-xylulose-5-phosphate (DXP).</text>
</comment>
<comment type="catalytic activity">
    <reaction evidence="1">
        <text>D-glyceraldehyde 3-phosphate + pyruvate + H(+) = 1-deoxy-D-xylulose 5-phosphate + CO2</text>
        <dbReference type="Rhea" id="RHEA:12605"/>
        <dbReference type="ChEBI" id="CHEBI:15361"/>
        <dbReference type="ChEBI" id="CHEBI:15378"/>
        <dbReference type="ChEBI" id="CHEBI:16526"/>
        <dbReference type="ChEBI" id="CHEBI:57792"/>
        <dbReference type="ChEBI" id="CHEBI:59776"/>
        <dbReference type="EC" id="2.2.1.7"/>
    </reaction>
</comment>
<comment type="cofactor">
    <cofactor evidence="1">
        <name>Mg(2+)</name>
        <dbReference type="ChEBI" id="CHEBI:18420"/>
    </cofactor>
    <text evidence="1">Binds 1 Mg(2+) ion per subunit.</text>
</comment>
<comment type="cofactor">
    <cofactor evidence="1">
        <name>thiamine diphosphate</name>
        <dbReference type="ChEBI" id="CHEBI:58937"/>
    </cofactor>
    <text evidence="1">Binds 1 thiamine pyrophosphate per subunit.</text>
</comment>
<comment type="pathway">
    <text evidence="1">Metabolic intermediate biosynthesis; 1-deoxy-D-xylulose 5-phosphate biosynthesis; 1-deoxy-D-xylulose 5-phosphate from D-glyceraldehyde 3-phosphate and pyruvate: step 1/1.</text>
</comment>
<comment type="subunit">
    <text evidence="1">Homodimer.</text>
</comment>
<comment type="similarity">
    <text evidence="1">Belongs to the transketolase family. DXPS subfamily.</text>
</comment>
<proteinExistence type="inferred from homology"/>
<evidence type="ECO:0000255" key="1">
    <source>
        <dbReference type="HAMAP-Rule" id="MF_00315"/>
    </source>
</evidence>
<name>DXS_BRUAB</name>
<protein>
    <recommendedName>
        <fullName evidence="1">1-deoxy-D-xylulose-5-phosphate synthase</fullName>
        <ecNumber evidence="1">2.2.1.7</ecNumber>
    </recommendedName>
    <alternativeName>
        <fullName evidence="1">1-deoxyxylulose-5-phosphate synthase</fullName>
        <shortName evidence="1">DXP synthase</shortName>
        <shortName evidence="1">DXPS</shortName>
    </alternativeName>
</protein>
<sequence>MSRPSTPLLDKAPTPDRLRALPEQDLPQLAEELRTELIDAVSTTGGHLGAGLGVVELTVALHHVFNTPYDRIIWDVGHQAYPHKILTGRRDRIRTLRQAGGLSGFTKRAESEYDPFGAAHSSTSISAGLGMAVASELSGEKRNVIAVIGDGSMSAGMAYEAMNNAGALDARLIVILNDNDMSIAPPTGAMSAYLARLVSGRTYRSVREAAKQVAQKLPKFLQDKARKSEEYARAFFTGGTLFEELGFYYVGPIDGHNLDHLLPVLKNVRDTQKGPVLIHVVTQKGKGYAPAEAAADKYHGVNKFDVITGKQAKPPANAPSYTKIFGTSLIEEARHDDKIVAVTAAMPTGTGLDLFGEAFPKRVFDVGIAEQHAVTFAAGLASEGYKPFCAIYSTFLQRGYDQVVHDVSIQNLPVRFPIDRAGLVGADGPTHAGSFDTGFLAALPGFVVMAASDEAELRHMVRTAAEYDEGPISFRYPRGDGVGVDLPERGSVLEIGKGRIVREGTKVALLSFGTRLQECLAAAEELGAAGLSTTVADARFAKPLDHDLIRRLAREHEVLVMVEEGAVGGFSSHVLQFLATDGLLDRGLKVRALMLPDIYQDHGKPDAMYAEAGLDRTGIVRTVFAALHRDELGHEALPTPFRA</sequence>
<gene>
    <name evidence="1" type="primary">dxs</name>
    <name type="ordered locus">BruAb1_0458</name>
</gene>
<reference key="1">
    <citation type="journal article" date="2005" name="J. Bacteriol.">
        <title>Completion of the genome sequence of Brucella abortus and comparison to the highly similar genomes of Brucella melitensis and Brucella suis.</title>
        <authorList>
            <person name="Halling S.M."/>
            <person name="Peterson-Burch B.D."/>
            <person name="Bricker B.J."/>
            <person name="Zuerner R.L."/>
            <person name="Qing Z."/>
            <person name="Li L.-L."/>
            <person name="Kapur V."/>
            <person name="Alt D.P."/>
            <person name="Olsen S.C."/>
        </authorList>
    </citation>
    <scope>NUCLEOTIDE SEQUENCE [LARGE SCALE GENOMIC DNA]</scope>
    <source>
        <strain>9-941</strain>
    </source>
</reference>
<feature type="chain" id="PRO_0000256386" description="1-deoxy-D-xylulose-5-phosphate synthase">
    <location>
        <begin position="1"/>
        <end position="643"/>
    </location>
</feature>
<feature type="binding site" evidence="1">
    <location>
        <position position="78"/>
    </location>
    <ligand>
        <name>thiamine diphosphate</name>
        <dbReference type="ChEBI" id="CHEBI:58937"/>
    </ligand>
</feature>
<feature type="binding site" evidence="1">
    <location>
        <begin position="119"/>
        <end position="121"/>
    </location>
    <ligand>
        <name>thiamine diphosphate</name>
        <dbReference type="ChEBI" id="CHEBI:58937"/>
    </ligand>
</feature>
<feature type="binding site" evidence="1">
    <location>
        <position position="150"/>
    </location>
    <ligand>
        <name>Mg(2+)</name>
        <dbReference type="ChEBI" id="CHEBI:18420"/>
    </ligand>
</feature>
<feature type="binding site" evidence="1">
    <location>
        <begin position="151"/>
        <end position="152"/>
    </location>
    <ligand>
        <name>thiamine diphosphate</name>
        <dbReference type="ChEBI" id="CHEBI:58937"/>
    </ligand>
</feature>
<feature type="binding site" evidence="1">
    <location>
        <position position="179"/>
    </location>
    <ligand>
        <name>Mg(2+)</name>
        <dbReference type="ChEBI" id="CHEBI:18420"/>
    </ligand>
</feature>
<feature type="binding site" evidence="1">
    <location>
        <position position="179"/>
    </location>
    <ligand>
        <name>thiamine diphosphate</name>
        <dbReference type="ChEBI" id="CHEBI:58937"/>
    </ligand>
</feature>
<feature type="binding site" evidence="1">
    <location>
        <position position="288"/>
    </location>
    <ligand>
        <name>thiamine diphosphate</name>
        <dbReference type="ChEBI" id="CHEBI:58937"/>
    </ligand>
</feature>
<feature type="binding site" evidence="1">
    <location>
        <position position="370"/>
    </location>
    <ligand>
        <name>thiamine diphosphate</name>
        <dbReference type="ChEBI" id="CHEBI:58937"/>
    </ligand>
</feature>
<keyword id="KW-0414">Isoprene biosynthesis</keyword>
<keyword id="KW-0460">Magnesium</keyword>
<keyword id="KW-0479">Metal-binding</keyword>
<keyword id="KW-0784">Thiamine biosynthesis</keyword>
<keyword id="KW-0786">Thiamine pyrophosphate</keyword>
<keyword id="KW-0808">Transferase</keyword>
<dbReference type="EC" id="2.2.1.7" evidence="1"/>
<dbReference type="EMBL" id="AE017223">
    <property type="protein sequence ID" value="AAX73853.1"/>
    <property type="molecule type" value="Genomic_DNA"/>
</dbReference>
<dbReference type="RefSeq" id="WP_002968705.1">
    <property type="nucleotide sequence ID" value="NC_006932.1"/>
</dbReference>
<dbReference type="SMR" id="Q57ET1"/>
<dbReference type="EnsemblBacteria" id="AAX73853">
    <property type="protein sequence ID" value="AAX73853"/>
    <property type="gene ID" value="BruAb1_0458"/>
</dbReference>
<dbReference type="KEGG" id="bmb:BruAb1_0458"/>
<dbReference type="HOGENOM" id="CLU_009227_1_4_5"/>
<dbReference type="UniPathway" id="UPA00064">
    <property type="reaction ID" value="UER00091"/>
</dbReference>
<dbReference type="Proteomes" id="UP000000540">
    <property type="component" value="Chromosome I"/>
</dbReference>
<dbReference type="GO" id="GO:0008661">
    <property type="term" value="F:1-deoxy-D-xylulose-5-phosphate synthase activity"/>
    <property type="evidence" value="ECO:0007669"/>
    <property type="project" value="UniProtKB-UniRule"/>
</dbReference>
<dbReference type="GO" id="GO:0000287">
    <property type="term" value="F:magnesium ion binding"/>
    <property type="evidence" value="ECO:0007669"/>
    <property type="project" value="UniProtKB-UniRule"/>
</dbReference>
<dbReference type="GO" id="GO:0030976">
    <property type="term" value="F:thiamine pyrophosphate binding"/>
    <property type="evidence" value="ECO:0007669"/>
    <property type="project" value="UniProtKB-UniRule"/>
</dbReference>
<dbReference type="GO" id="GO:0052865">
    <property type="term" value="P:1-deoxy-D-xylulose 5-phosphate biosynthetic process"/>
    <property type="evidence" value="ECO:0007669"/>
    <property type="project" value="UniProtKB-UniPathway"/>
</dbReference>
<dbReference type="GO" id="GO:0019682">
    <property type="term" value="P:glyceraldehyde-3-phosphate metabolic process"/>
    <property type="evidence" value="ECO:0007669"/>
    <property type="project" value="UniProtKB-ARBA"/>
</dbReference>
<dbReference type="GO" id="GO:0016114">
    <property type="term" value="P:terpenoid biosynthetic process"/>
    <property type="evidence" value="ECO:0007669"/>
    <property type="project" value="UniProtKB-UniRule"/>
</dbReference>
<dbReference type="GO" id="GO:0009228">
    <property type="term" value="P:thiamine biosynthetic process"/>
    <property type="evidence" value="ECO:0007669"/>
    <property type="project" value="UniProtKB-UniRule"/>
</dbReference>
<dbReference type="CDD" id="cd02007">
    <property type="entry name" value="TPP_DXS"/>
    <property type="match status" value="1"/>
</dbReference>
<dbReference type="CDD" id="cd07033">
    <property type="entry name" value="TPP_PYR_DXS_TK_like"/>
    <property type="match status" value="1"/>
</dbReference>
<dbReference type="FunFam" id="3.40.50.920:FF:000002">
    <property type="entry name" value="1-deoxy-D-xylulose-5-phosphate synthase"/>
    <property type="match status" value="1"/>
</dbReference>
<dbReference type="FunFam" id="3.40.50.970:FF:000005">
    <property type="entry name" value="1-deoxy-D-xylulose-5-phosphate synthase"/>
    <property type="match status" value="1"/>
</dbReference>
<dbReference type="Gene3D" id="3.40.50.920">
    <property type="match status" value="1"/>
</dbReference>
<dbReference type="Gene3D" id="3.40.50.970">
    <property type="match status" value="2"/>
</dbReference>
<dbReference type="HAMAP" id="MF_00315">
    <property type="entry name" value="DXP_synth"/>
    <property type="match status" value="1"/>
</dbReference>
<dbReference type="InterPro" id="IPR005477">
    <property type="entry name" value="Dxylulose-5-P_synthase"/>
</dbReference>
<dbReference type="InterPro" id="IPR029061">
    <property type="entry name" value="THDP-binding"/>
</dbReference>
<dbReference type="InterPro" id="IPR009014">
    <property type="entry name" value="Transketo_C/PFOR_II"/>
</dbReference>
<dbReference type="InterPro" id="IPR005475">
    <property type="entry name" value="Transketolase-like_Pyr-bd"/>
</dbReference>
<dbReference type="InterPro" id="IPR020826">
    <property type="entry name" value="Transketolase_BS"/>
</dbReference>
<dbReference type="InterPro" id="IPR033248">
    <property type="entry name" value="Transketolase_C"/>
</dbReference>
<dbReference type="InterPro" id="IPR049557">
    <property type="entry name" value="Transketolase_CS"/>
</dbReference>
<dbReference type="NCBIfam" id="TIGR00204">
    <property type="entry name" value="dxs"/>
    <property type="match status" value="1"/>
</dbReference>
<dbReference type="NCBIfam" id="NF003933">
    <property type="entry name" value="PRK05444.2-2"/>
    <property type="match status" value="1"/>
</dbReference>
<dbReference type="PANTHER" id="PTHR43322">
    <property type="entry name" value="1-D-DEOXYXYLULOSE 5-PHOSPHATE SYNTHASE-RELATED"/>
    <property type="match status" value="1"/>
</dbReference>
<dbReference type="PANTHER" id="PTHR43322:SF5">
    <property type="entry name" value="1-DEOXY-D-XYLULOSE-5-PHOSPHATE SYNTHASE, CHLOROPLASTIC"/>
    <property type="match status" value="1"/>
</dbReference>
<dbReference type="Pfam" id="PF13292">
    <property type="entry name" value="DXP_synthase_N"/>
    <property type="match status" value="1"/>
</dbReference>
<dbReference type="Pfam" id="PF02779">
    <property type="entry name" value="Transket_pyr"/>
    <property type="match status" value="1"/>
</dbReference>
<dbReference type="Pfam" id="PF02780">
    <property type="entry name" value="Transketolase_C"/>
    <property type="match status" value="1"/>
</dbReference>
<dbReference type="SMART" id="SM00861">
    <property type="entry name" value="Transket_pyr"/>
    <property type="match status" value="1"/>
</dbReference>
<dbReference type="SUPFAM" id="SSF52518">
    <property type="entry name" value="Thiamin diphosphate-binding fold (THDP-binding)"/>
    <property type="match status" value="2"/>
</dbReference>
<dbReference type="SUPFAM" id="SSF52922">
    <property type="entry name" value="TK C-terminal domain-like"/>
    <property type="match status" value="1"/>
</dbReference>
<dbReference type="PROSITE" id="PS00801">
    <property type="entry name" value="TRANSKETOLASE_1"/>
    <property type="match status" value="1"/>
</dbReference>
<dbReference type="PROSITE" id="PS00802">
    <property type="entry name" value="TRANSKETOLASE_2"/>
    <property type="match status" value="1"/>
</dbReference>
<organism>
    <name type="scientific">Brucella abortus biovar 1 (strain 9-941)</name>
    <dbReference type="NCBI Taxonomy" id="262698"/>
    <lineage>
        <taxon>Bacteria</taxon>
        <taxon>Pseudomonadati</taxon>
        <taxon>Pseudomonadota</taxon>
        <taxon>Alphaproteobacteria</taxon>
        <taxon>Hyphomicrobiales</taxon>
        <taxon>Brucellaceae</taxon>
        <taxon>Brucella/Ochrobactrum group</taxon>
        <taxon>Brucella</taxon>
    </lineage>
</organism>